<reference key="1">
    <citation type="journal article" date="2001" name="Nature">
        <title>Genome sequence of enterohaemorrhagic Escherichia coli O157:H7.</title>
        <authorList>
            <person name="Perna N.T."/>
            <person name="Plunkett G. III"/>
            <person name="Burland V."/>
            <person name="Mau B."/>
            <person name="Glasner J.D."/>
            <person name="Rose D.J."/>
            <person name="Mayhew G.F."/>
            <person name="Evans P.S."/>
            <person name="Gregor J."/>
            <person name="Kirkpatrick H.A."/>
            <person name="Posfai G."/>
            <person name="Hackett J."/>
            <person name="Klink S."/>
            <person name="Boutin A."/>
            <person name="Shao Y."/>
            <person name="Miller L."/>
            <person name="Grotbeck E.J."/>
            <person name="Davis N.W."/>
            <person name="Lim A."/>
            <person name="Dimalanta E.T."/>
            <person name="Potamousis K."/>
            <person name="Apodaca J."/>
            <person name="Anantharaman T.S."/>
            <person name="Lin J."/>
            <person name="Yen G."/>
            <person name="Schwartz D.C."/>
            <person name="Welch R.A."/>
            <person name="Blattner F.R."/>
        </authorList>
    </citation>
    <scope>NUCLEOTIDE SEQUENCE [LARGE SCALE GENOMIC DNA]</scope>
    <source>
        <strain>O157:H7 / EDL933 / ATCC 700927 / EHEC</strain>
    </source>
</reference>
<reference key="2">
    <citation type="journal article" date="2001" name="DNA Res.">
        <title>Complete genome sequence of enterohemorrhagic Escherichia coli O157:H7 and genomic comparison with a laboratory strain K-12.</title>
        <authorList>
            <person name="Hayashi T."/>
            <person name="Makino K."/>
            <person name="Ohnishi M."/>
            <person name="Kurokawa K."/>
            <person name="Ishii K."/>
            <person name="Yokoyama K."/>
            <person name="Han C.-G."/>
            <person name="Ohtsubo E."/>
            <person name="Nakayama K."/>
            <person name="Murata T."/>
            <person name="Tanaka M."/>
            <person name="Tobe T."/>
            <person name="Iida T."/>
            <person name="Takami H."/>
            <person name="Honda T."/>
            <person name="Sasakawa C."/>
            <person name="Ogasawara N."/>
            <person name="Yasunaga T."/>
            <person name="Kuhara S."/>
            <person name="Shiba T."/>
            <person name="Hattori M."/>
            <person name="Shinagawa H."/>
        </authorList>
    </citation>
    <scope>NUCLEOTIDE SEQUENCE [LARGE SCALE GENOMIC DNA]</scope>
    <source>
        <strain>O157:H7 / Sakai / RIMD 0509952 / EHEC</strain>
    </source>
</reference>
<accession>Q8X5V3</accession>
<accession>Q7A929</accession>
<name>DNAB_ECO57</name>
<organism>
    <name type="scientific">Escherichia coli O157:H7</name>
    <dbReference type="NCBI Taxonomy" id="83334"/>
    <lineage>
        <taxon>Bacteria</taxon>
        <taxon>Pseudomonadati</taxon>
        <taxon>Pseudomonadota</taxon>
        <taxon>Gammaproteobacteria</taxon>
        <taxon>Enterobacterales</taxon>
        <taxon>Enterobacteriaceae</taxon>
        <taxon>Escherichia</taxon>
    </lineage>
</organism>
<protein>
    <recommendedName>
        <fullName>Replicative DNA helicase DnaB</fullName>
        <ecNumber evidence="1">5.6.2.3</ecNumber>
    </recommendedName>
    <alternativeName>
        <fullName evidence="4">DNA 5'-3' helicase DnaB</fullName>
    </alternativeName>
</protein>
<sequence length="471" mass="52406">MAGNKPFNKQQAEPRERDPQVAGLKVPPHSIEAEQSVLGGLMLDNERWDDVAERVVADDFYTRPHRHIFTEMARLQESGSPIDLITLAESLERQGQLDSVGGFAYLAELSKNTPSAANISSYADIVRERAVVREMISVANEIAEAGFDPQGRTSEDLLDLAESRVFKIAESRANKDEGPKNIADVLDATVARIEQLFQQPHDGVTGVNTGYDDLNKKTAGLQPSDLIIVAARPSMGKTTFAMNLVENAAMLQDKPVLIFSLEMPSEQIMMRSLASLSRVDQTKIRTGQLDDEDWARISGTMGILLEKRNIYIDDSSGLTPTEVRSRARRIAREHGGIGLIMIDYLQLMRVPALSDNRTLEIAEISRSLKALAKELNVPVVALSQLNRSLEQRADKRPVNSDLRESGSIEQDADLIMFIYRDEVYHENSDLKGIAEIIIGKQRNGPIGTVRLTFNGQWSRFDNYAGPQYDDE</sequence>
<feature type="chain" id="PRO_0000102020" description="Replicative DNA helicase DnaB">
    <location>
        <begin position="1"/>
        <end position="471"/>
    </location>
</feature>
<feature type="domain" description="SF4 helicase" evidence="2">
    <location>
        <begin position="200"/>
        <end position="467"/>
    </location>
</feature>
<feature type="region of interest" description="Disordered" evidence="3">
    <location>
        <begin position="1"/>
        <end position="27"/>
    </location>
</feature>
<feature type="binding site" evidence="2">
    <location>
        <begin position="231"/>
        <end position="238"/>
    </location>
    <ligand>
        <name>ATP</name>
        <dbReference type="ChEBI" id="CHEBI:30616"/>
    </ligand>
</feature>
<dbReference type="EC" id="5.6.2.3" evidence="1"/>
<dbReference type="EMBL" id="AE005174">
    <property type="protein sequence ID" value="AAG59250.1"/>
    <property type="molecule type" value="Genomic_DNA"/>
</dbReference>
<dbReference type="EMBL" id="BA000007">
    <property type="protein sequence ID" value="BAB38457.1"/>
    <property type="molecule type" value="Genomic_DNA"/>
</dbReference>
<dbReference type="PIR" id="B91258">
    <property type="entry name" value="B91258"/>
</dbReference>
<dbReference type="PIR" id="F86098">
    <property type="entry name" value="F86098"/>
</dbReference>
<dbReference type="RefSeq" id="NP_313061.1">
    <property type="nucleotide sequence ID" value="NC_002695.1"/>
</dbReference>
<dbReference type="RefSeq" id="WP_000918366.1">
    <property type="nucleotide sequence ID" value="NZ_VOAI01000008.1"/>
</dbReference>
<dbReference type="BMRB" id="Q8X5V3"/>
<dbReference type="SMR" id="Q8X5V3"/>
<dbReference type="STRING" id="155864.Z5650"/>
<dbReference type="GeneID" id="914301"/>
<dbReference type="KEGG" id="ece:Z5650"/>
<dbReference type="KEGG" id="ecs:ECs_5034"/>
<dbReference type="PATRIC" id="fig|386585.9.peg.5257"/>
<dbReference type="eggNOG" id="COG0305">
    <property type="taxonomic scope" value="Bacteria"/>
</dbReference>
<dbReference type="HOGENOM" id="CLU_005373_0_0_6"/>
<dbReference type="OMA" id="IEFHARI"/>
<dbReference type="Proteomes" id="UP000000558">
    <property type="component" value="Chromosome"/>
</dbReference>
<dbReference type="Proteomes" id="UP000002519">
    <property type="component" value="Chromosome"/>
</dbReference>
<dbReference type="GO" id="GO:0005829">
    <property type="term" value="C:cytosol"/>
    <property type="evidence" value="ECO:0007669"/>
    <property type="project" value="TreeGrafter"/>
</dbReference>
<dbReference type="GO" id="GO:1990077">
    <property type="term" value="C:primosome complex"/>
    <property type="evidence" value="ECO:0007669"/>
    <property type="project" value="UniProtKB-KW"/>
</dbReference>
<dbReference type="GO" id="GO:0005524">
    <property type="term" value="F:ATP binding"/>
    <property type="evidence" value="ECO:0007669"/>
    <property type="project" value="UniProtKB-KW"/>
</dbReference>
<dbReference type="GO" id="GO:0016887">
    <property type="term" value="F:ATP hydrolysis activity"/>
    <property type="evidence" value="ECO:0007669"/>
    <property type="project" value="InterPro"/>
</dbReference>
<dbReference type="GO" id="GO:0003677">
    <property type="term" value="F:DNA binding"/>
    <property type="evidence" value="ECO:0007669"/>
    <property type="project" value="UniProtKB-KW"/>
</dbReference>
<dbReference type="GO" id="GO:0003678">
    <property type="term" value="F:DNA helicase activity"/>
    <property type="evidence" value="ECO:0007669"/>
    <property type="project" value="InterPro"/>
</dbReference>
<dbReference type="GO" id="GO:0006269">
    <property type="term" value="P:DNA replication, synthesis of primer"/>
    <property type="evidence" value="ECO:0007669"/>
    <property type="project" value="UniProtKB-KW"/>
</dbReference>
<dbReference type="CDD" id="cd00984">
    <property type="entry name" value="DnaB_C"/>
    <property type="match status" value="1"/>
</dbReference>
<dbReference type="FunFam" id="1.10.860.10:FF:000002">
    <property type="entry name" value="Replicative DNA helicase"/>
    <property type="match status" value="1"/>
</dbReference>
<dbReference type="FunFam" id="3.40.50.300:FF:000076">
    <property type="entry name" value="Replicative DNA helicase"/>
    <property type="match status" value="1"/>
</dbReference>
<dbReference type="Gene3D" id="1.10.860.10">
    <property type="entry name" value="DNAb Helicase, Chain A"/>
    <property type="match status" value="1"/>
</dbReference>
<dbReference type="Gene3D" id="3.40.50.300">
    <property type="entry name" value="P-loop containing nucleotide triphosphate hydrolases"/>
    <property type="match status" value="1"/>
</dbReference>
<dbReference type="InterPro" id="IPR003593">
    <property type="entry name" value="AAA+_ATPase"/>
</dbReference>
<dbReference type="InterPro" id="IPR036185">
    <property type="entry name" value="DNA_heli_DnaB-like_N_sf"/>
</dbReference>
<dbReference type="InterPro" id="IPR007692">
    <property type="entry name" value="DNA_helicase_DnaB"/>
</dbReference>
<dbReference type="InterPro" id="IPR007694">
    <property type="entry name" value="DNA_helicase_DnaB-like_C"/>
</dbReference>
<dbReference type="InterPro" id="IPR007693">
    <property type="entry name" value="DNA_helicase_DnaB-like_N"/>
</dbReference>
<dbReference type="InterPro" id="IPR016136">
    <property type="entry name" value="DNA_helicase_N/primase_C"/>
</dbReference>
<dbReference type="InterPro" id="IPR027417">
    <property type="entry name" value="P-loop_NTPase"/>
</dbReference>
<dbReference type="NCBIfam" id="TIGR00665">
    <property type="entry name" value="DnaB"/>
    <property type="match status" value="1"/>
</dbReference>
<dbReference type="NCBIfam" id="NF004384">
    <property type="entry name" value="PRK05748.1"/>
    <property type="match status" value="1"/>
</dbReference>
<dbReference type="NCBIfam" id="NF005945">
    <property type="entry name" value="PRK08006.1"/>
    <property type="match status" value="1"/>
</dbReference>
<dbReference type="NCBIfam" id="NF006458">
    <property type="entry name" value="PRK08840.1"/>
    <property type="match status" value="1"/>
</dbReference>
<dbReference type="PANTHER" id="PTHR30153:SF2">
    <property type="entry name" value="REPLICATIVE DNA HELICASE"/>
    <property type="match status" value="1"/>
</dbReference>
<dbReference type="PANTHER" id="PTHR30153">
    <property type="entry name" value="REPLICATIVE DNA HELICASE DNAB"/>
    <property type="match status" value="1"/>
</dbReference>
<dbReference type="Pfam" id="PF00772">
    <property type="entry name" value="DnaB"/>
    <property type="match status" value="1"/>
</dbReference>
<dbReference type="Pfam" id="PF03796">
    <property type="entry name" value="DnaB_C"/>
    <property type="match status" value="1"/>
</dbReference>
<dbReference type="SMART" id="SM00382">
    <property type="entry name" value="AAA"/>
    <property type="match status" value="1"/>
</dbReference>
<dbReference type="SUPFAM" id="SSF48024">
    <property type="entry name" value="N-terminal domain of DnaB helicase"/>
    <property type="match status" value="1"/>
</dbReference>
<dbReference type="SUPFAM" id="SSF52540">
    <property type="entry name" value="P-loop containing nucleoside triphosphate hydrolases"/>
    <property type="match status" value="1"/>
</dbReference>
<dbReference type="PROSITE" id="PS51199">
    <property type="entry name" value="SF4_HELICASE"/>
    <property type="match status" value="1"/>
</dbReference>
<proteinExistence type="inferred from homology"/>
<keyword id="KW-0067">ATP-binding</keyword>
<keyword id="KW-0235">DNA replication</keyword>
<keyword id="KW-0238">DNA-binding</keyword>
<keyword id="KW-0347">Helicase</keyword>
<keyword id="KW-0378">Hydrolase</keyword>
<keyword id="KW-0413">Isomerase</keyword>
<keyword id="KW-0547">Nucleotide-binding</keyword>
<keyword id="KW-0639">Primosome</keyword>
<keyword id="KW-1185">Reference proteome</keyword>
<evidence type="ECO:0000250" key="1">
    <source>
        <dbReference type="UniProtKB" id="P0ACB0"/>
    </source>
</evidence>
<evidence type="ECO:0000255" key="2">
    <source>
        <dbReference type="PROSITE-ProRule" id="PRU00596"/>
    </source>
</evidence>
<evidence type="ECO:0000256" key="3">
    <source>
        <dbReference type="SAM" id="MobiDB-lite"/>
    </source>
</evidence>
<evidence type="ECO:0000305" key="4"/>
<gene>
    <name type="primary">dnaB</name>
    <name type="ordered locus">Z5650</name>
    <name type="ordered locus">ECs5034</name>
</gene>
<comment type="function">
    <text evidence="1">The main replicative DNA helicase, it participates in initiation and elongation during chromosome replication. Travels ahead of the DNA replisome, separating dsDNA into templates for DNA synthesis. A processive ATP-dependent 5'-3' DNA helicase it has DNA-dependent ATPase activity.</text>
</comment>
<comment type="catalytic activity">
    <reaction evidence="1">
        <text>Couples ATP hydrolysis with the unwinding of duplex DNA at the replication fork by translocating in the 5'-3' direction. This creates two antiparallel DNA single strands (ssDNA). The leading ssDNA polymer is the template for DNA polymerase III holoenzyme which synthesizes a continuous strand.</text>
        <dbReference type="EC" id="5.6.2.3"/>
    </reaction>
</comment>
<comment type="catalytic activity">
    <reaction evidence="1">
        <text>ATP + H2O = ADP + phosphate + H(+)</text>
        <dbReference type="Rhea" id="RHEA:13065"/>
        <dbReference type="ChEBI" id="CHEBI:15377"/>
        <dbReference type="ChEBI" id="CHEBI:15378"/>
        <dbReference type="ChEBI" id="CHEBI:30616"/>
        <dbReference type="ChEBI" id="CHEBI:43474"/>
        <dbReference type="ChEBI" id="CHEBI:456216"/>
        <dbReference type="EC" id="5.6.2.3"/>
    </reaction>
</comment>
<comment type="subunit">
    <text evidence="1">Homohexamer.</text>
</comment>
<comment type="similarity">
    <text evidence="4">Belongs to the helicase family. DnaB subfamily.</text>
</comment>